<comment type="function">
    <text evidence="6">Chemotactic-signal transducers respond to changes in the concentration of attractants and repellents in the environment, transduce a signal from the outside to the inside of the cell, and facilitate sensory adaptation through the variation of the level of methylation. All amino acids serve as attractants in B.subtilis, they appear to cause an increase in the turnover methyl groups, leading to methylation of an unidentified acceptor, while repellents have been shown to cause a decrease in methyl group turnover. The methyl groups are added by a methyltransferase and removed by a methylesterase. McpA is required for taxis towards glucose and alpha-methylglucoside.</text>
</comment>
<comment type="subunit">
    <text evidence="5">Interacts with FloT.</text>
</comment>
<comment type="subcellular location">
    <subcellularLocation>
        <location evidence="5">Cell membrane</location>
        <topology evidence="1">Multi-pass membrane protein</topology>
    </subcellularLocation>
    <subcellularLocation>
        <location evidence="5">Membrane raft</location>
        <topology evidence="1">Multi-pass membrane protein</topology>
    </subcellularLocation>
    <text evidence="5">Present in detergent-resistant membrane (DRM) fractions that may be equivalent to eukaryotic membrane rafts; these rafts include proteins involved in signaling, molecule trafficking and protein secretion.</text>
</comment>
<comment type="PTM">
    <text evidence="4 6">Deamidated by CheD on Gln-593 and Gln-594, producing glutamate residues. The glutamate residues are then methylated. Other additional sites are deamidated and methylated as well.</text>
</comment>
<comment type="similarity">
    <text evidence="7">Belongs to the methyl-accepting chemotaxis (MCP) protein family.</text>
</comment>
<dbReference type="EMBL" id="L29189">
    <property type="protein sequence ID" value="AAA20556.1"/>
    <property type="molecule type" value="Genomic_DNA"/>
</dbReference>
<dbReference type="EMBL" id="AL009126">
    <property type="protein sequence ID" value="CAB15102.2"/>
    <property type="molecule type" value="Genomic_DNA"/>
</dbReference>
<dbReference type="PIR" id="B54078">
    <property type="entry name" value="B54078"/>
</dbReference>
<dbReference type="RefSeq" id="NP_391002.2">
    <property type="nucleotide sequence ID" value="NC_000964.3"/>
</dbReference>
<dbReference type="RefSeq" id="WP_003244077.1">
    <property type="nucleotide sequence ID" value="NZ_OZ025638.1"/>
</dbReference>
<dbReference type="SMR" id="P39214"/>
<dbReference type="FunCoup" id="P39214">
    <property type="interactions" value="208"/>
</dbReference>
<dbReference type="IntAct" id="P39214">
    <property type="interactions" value="23"/>
</dbReference>
<dbReference type="STRING" id="224308.BSU31240"/>
<dbReference type="jPOST" id="P39214"/>
<dbReference type="PaxDb" id="224308-BSU31240"/>
<dbReference type="EnsemblBacteria" id="CAB15102">
    <property type="protein sequence ID" value="CAB15102"/>
    <property type="gene ID" value="BSU_31240"/>
</dbReference>
<dbReference type="GeneID" id="937154"/>
<dbReference type="KEGG" id="bsu:BSU31240"/>
<dbReference type="PATRIC" id="fig|224308.179.peg.3384"/>
<dbReference type="eggNOG" id="COG0840">
    <property type="taxonomic scope" value="Bacteria"/>
</dbReference>
<dbReference type="InParanoid" id="P39214"/>
<dbReference type="OrthoDB" id="9760371at2"/>
<dbReference type="PhylomeDB" id="P39214"/>
<dbReference type="BioCyc" id="BSUB:BSU31240-MONOMER"/>
<dbReference type="Proteomes" id="UP000001570">
    <property type="component" value="Chromosome"/>
</dbReference>
<dbReference type="GO" id="GO:0045121">
    <property type="term" value="C:membrane raft"/>
    <property type="evidence" value="ECO:0007669"/>
    <property type="project" value="UniProtKB-SubCell"/>
</dbReference>
<dbReference type="GO" id="GO:0005886">
    <property type="term" value="C:plasma membrane"/>
    <property type="evidence" value="ECO:0007669"/>
    <property type="project" value="UniProtKB-SubCell"/>
</dbReference>
<dbReference type="GO" id="GO:0006935">
    <property type="term" value="P:chemotaxis"/>
    <property type="evidence" value="ECO:0000318"/>
    <property type="project" value="GO_Central"/>
</dbReference>
<dbReference type="GO" id="GO:0007165">
    <property type="term" value="P:signal transduction"/>
    <property type="evidence" value="ECO:0007669"/>
    <property type="project" value="UniProtKB-KW"/>
</dbReference>
<dbReference type="CDD" id="cd06225">
    <property type="entry name" value="HAMP"/>
    <property type="match status" value="1"/>
</dbReference>
<dbReference type="CDD" id="cd11386">
    <property type="entry name" value="MCP_signal"/>
    <property type="match status" value="1"/>
</dbReference>
<dbReference type="CDD" id="cd18773">
    <property type="entry name" value="PDC1_HK_sensor"/>
    <property type="match status" value="1"/>
</dbReference>
<dbReference type="CDD" id="cd12912">
    <property type="entry name" value="PDC2_MCP_like"/>
    <property type="match status" value="1"/>
</dbReference>
<dbReference type="Gene3D" id="6.10.340.10">
    <property type="match status" value="1"/>
</dbReference>
<dbReference type="Gene3D" id="1.10.287.950">
    <property type="entry name" value="Methyl-accepting chemotaxis protein"/>
    <property type="match status" value="1"/>
</dbReference>
<dbReference type="Gene3D" id="3.30.450.20">
    <property type="entry name" value="PAS domain"/>
    <property type="match status" value="2"/>
</dbReference>
<dbReference type="InterPro" id="IPR033479">
    <property type="entry name" value="dCache_1"/>
</dbReference>
<dbReference type="InterPro" id="IPR003660">
    <property type="entry name" value="HAMP_dom"/>
</dbReference>
<dbReference type="InterPro" id="IPR004089">
    <property type="entry name" value="MCPsignal_dom"/>
</dbReference>
<dbReference type="InterPro" id="IPR029151">
    <property type="entry name" value="Sensor-like_sf"/>
</dbReference>
<dbReference type="InterPro" id="IPR003122">
    <property type="entry name" value="Tar_rcpt_lig-bd"/>
</dbReference>
<dbReference type="PANTHER" id="PTHR32089">
    <property type="entry name" value="METHYL-ACCEPTING CHEMOTAXIS PROTEIN MCPB"/>
    <property type="match status" value="1"/>
</dbReference>
<dbReference type="PANTHER" id="PTHR32089:SF114">
    <property type="entry name" value="METHYL-ACCEPTING CHEMOTAXIS PROTEIN MCPB"/>
    <property type="match status" value="1"/>
</dbReference>
<dbReference type="Pfam" id="PF02743">
    <property type="entry name" value="dCache_1"/>
    <property type="match status" value="1"/>
</dbReference>
<dbReference type="Pfam" id="PF00672">
    <property type="entry name" value="HAMP"/>
    <property type="match status" value="1"/>
</dbReference>
<dbReference type="Pfam" id="PF00015">
    <property type="entry name" value="MCPsignal"/>
    <property type="match status" value="1"/>
</dbReference>
<dbReference type="SMART" id="SM00304">
    <property type="entry name" value="HAMP"/>
    <property type="match status" value="1"/>
</dbReference>
<dbReference type="SMART" id="SM00283">
    <property type="entry name" value="MA"/>
    <property type="match status" value="1"/>
</dbReference>
<dbReference type="SMART" id="SM00319">
    <property type="entry name" value="TarH"/>
    <property type="match status" value="1"/>
</dbReference>
<dbReference type="SUPFAM" id="SSF58104">
    <property type="entry name" value="Methyl-accepting chemotaxis protein (MCP) signaling domain"/>
    <property type="match status" value="1"/>
</dbReference>
<dbReference type="SUPFAM" id="SSF103190">
    <property type="entry name" value="Sensory domain-like"/>
    <property type="match status" value="1"/>
</dbReference>
<dbReference type="PROSITE" id="PS50111">
    <property type="entry name" value="CHEMOTAXIS_TRANSDUC_2"/>
    <property type="match status" value="1"/>
</dbReference>
<dbReference type="PROSITE" id="PS50885">
    <property type="entry name" value="HAMP"/>
    <property type="match status" value="1"/>
</dbReference>
<reference key="1">
    <citation type="journal article" date="1994" name="J. Biol. Chem.">
        <title>Cloning and characterization of genes encoding methyl-accepting chemotaxis proteins in Bacillus subtilis.</title>
        <authorList>
            <person name="Hanlon D.W."/>
            <person name="Ordal G.W."/>
        </authorList>
    </citation>
    <scope>NUCLEOTIDE SEQUENCE [GENOMIC DNA]</scope>
    <scope>METHYLATION AT GLU-370; GLN-594; GLU-629 AND GLU-636</scope>
    <scope>DEAMIDATION AT GLN-594</scope>
    <scope>FUNCTION</scope>
    <source>
        <strain>168 / OI1085</strain>
    </source>
</reference>
<reference key="2">
    <citation type="journal article" date="1997" name="Nature">
        <title>The complete genome sequence of the Gram-positive bacterium Bacillus subtilis.</title>
        <authorList>
            <person name="Kunst F."/>
            <person name="Ogasawara N."/>
            <person name="Moszer I."/>
            <person name="Albertini A.M."/>
            <person name="Alloni G."/>
            <person name="Azevedo V."/>
            <person name="Bertero M.G."/>
            <person name="Bessieres P."/>
            <person name="Bolotin A."/>
            <person name="Borchert S."/>
            <person name="Borriss R."/>
            <person name="Boursier L."/>
            <person name="Brans A."/>
            <person name="Braun M."/>
            <person name="Brignell S.C."/>
            <person name="Bron S."/>
            <person name="Brouillet S."/>
            <person name="Bruschi C.V."/>
            <person name="Caldwell B."/>
            <person name="Capuano V."/>
            <person name="Carter N.M."/>
            <person name="Choi S.-K."/>
            <person name="Codani J.-J."/>
            <person name="Connerton I.F."/>
            <person name="Cummings N.J."/>
            <person name="Daniel R.A."/>
            <person name="Denizot F."/>
            <person name="Devine K.M."/>
            <person name="Duesterhoeft A."/>
            <person name="Ehrlich S.D."/>
            <person name="Emmerson P.T."/>
            <person name="Entian K.-D."/>
            <person name="Errington J."/>
            <person name="Fabret C."/>
            <person name="Ferrari E."/>
            <person name="Foulger D."/>
            <person name="Fritz C."/>
            <person name="Fujita M."/>
            <person name="Fujita Y."/>
            <person name="Fuma S."/>
            <person name="Galizzi A."/>
            <person name="Galleron N."/>
            <person name="Ghim S.-Y."/>
            <person name="Glaser P."/>
            <person name="Goffeau A."/>
            <person name="Golightly E.J."/>
            <person name="Grandi G."/>
            <person name="Guiseppi G."/>
            <person name="Guy B.J."/>
            <person name="Haga K."/>
            <person name="Haiech J."/>
            <person name="Harwood C.R."/>
            <person name="Henaut A."/>
            <person name="Hilbert H."/>
            <person name="Holsappel S."/>
            <person name="Hosono S."/>
            <person name="Hullo M.-F."/>
            <person name="Itaya M."/>
            <person name="Jones L.-M."/>
            <person name="Joris B."/>
            <person name="Karamata D."/>
            <person name="Kasahara Y."/>
            <person name="Klaerr-Blanchard M."/>
            <person name="Klein C."/>
            <person name="Kobayashi Y."/>
            <person name="Koetter P."/>
            <person name="Koningstein G."/>
            <person name="Krogh S."/>
            <person name="Kumano M."/>
            <person name="Kurita K."/>
            <person name="Lapidus A."/>
            <person name="Lardinois S."/>
            <person name="Lauber J."/>
            <person name="Lazarevic V."/>
            <person name="Lee S.-M."/>
            <person name="Levine A."/>
            <person name="Liu H."/>
            <person name="Masuda S."/>
            <person name="Mauel C."/>
            <person name="Medigue C."/>
            <person name="Medina N."/>
            <person name="Mellado R.P."/>
            <person name="Mizuno M."/>
            <person name="Moestl D."/>
            <person name="Nakai S."/>
            <person name="Noback M."/>
            <person name="Noone D."/>
            <person name="O'Reilly M."/>
            <person name="Ogawa K."/>
            <person name="Ogiwara A."/>
            <person name="Oudega B."/>
            <person name="Park S.-H."/>
            <person name="Parro V."/>
            <person name="Pohl T.M."/>
            <person name="Portetelle D."/>
            <person name="Porwollik S."/>
            <person name="Prescott A.M."/>
            <person name="Presecan E."/>
            <person name="Pujic P."/>
            <person name="Purnelle B."/>
            <person name="Rapoport G."/>
            <person name="Rey M."/>
            <person name="Reynolds S."/>
            <person name="Rieger M."/>
            <person name="Rivolta C."/>
            <person name="Rocha E."/>
            <person name="Roche B."/>
            <person name="Rose M."/>
            <person name="Sadaie Y."/>
            <person name="Sato T."/>
            <person name="Scanlan E."/>
            <person name="Schleich S."/>
            <person name="Schroeter R."/>
            <person name="Scoffone F."/>
            <person name="Sekiguchi J."/>
            <person name="Sekowska A."/>
            <person name="Seror S.J."/>
            <person name="Serror P."/>
            <person name="Shin B.-S."/>
            <person name="Soldo B."/>
            <person name="Sorokin A."/>
            <person name="Tacconi E."/>
            <person name="Takagi T."/>
            <person name="Takahashi H."/>
            <person name="Takemaru K."/>
            <person name="Takeuchi M."/>
            <person name="Tamakoshi A."/>
            <person name="Tanaka T."/>
            <person name="Terpstra P."/>
            <person name="Tognoni A."/>
            <person name="Tosato V."/>
            <person name="Uchiyama S."/>
            <person name="Vandenbol M."/>
            <person name="Vannier F."/>
            <person name="Vassarotti A."/>
            <person name="Viari A."/>
            <person name="Wambutt R."/>
            <person name="Wedler E."/>
            <person name="Wedler H."/>
            <person name="Weitzenegger T."/>
            <person name="Winters P."/>
            <person name="Wipat A."/>
            <person name="Yamamoto H."/>
            <person name="Yamane K."/>
            <person name="Yasumoto K."/>
            <person name="Yata K."/>
            <person name="Yoshida K."/>
            <person name="Yoshikawa H.-F."/>
            <person name="Zumstein E."/>
            <person name="Yoshikawa H."/>
            <person name="Danchin A."/>
        </authorList>
    </citation>
    <scope>NUCLEOTIDE SEQUENCE [LARGE SCALE GENOMIC DNA]</scope>
    <source>
        <strain>168</strain>
    </source>
</reference>
<reference key="3">
    <citation type="journal article" date="2009" name="Microbiology">
        <title>From a consortium sequence to a unified sequence: the Bacillus subtilis 168 reference genome a decade later.</title>
        <authorList>
            <person name="Barbe V."/>
            <person name="Cruveiller S."/>
            <person name="Kunst F."/>
            <person name="Lenoble P."/>
            <person name="Meurice G."/>
            <person name="Sekowska A."/>
            <person name="Vallenet D."/>
            <person name="Wang T."/>
            <person name="Moszer I."/>
            <person name="Medigue C."/>
            <person name="Danchin A."/>
        </authorList>
    </citation>
    <scope>SEQUENCE REVISION TO 95</scope>
</reference>
<reference key="4">
    <citation type="journal article" date="2002" name="J. Biol. Chem.">
        <title>Bacillus subtilis CheD is a chemoreceptor modification enzyme required for chemotaxis.</title>
        <authorList>
            <person name="Kristich C.J."/>
            <person name="Ordal G.W."/>
        </authorList>
    </citation>
    <scope>PROTEIN SEQUENCE OF 589-595</scope>
    <scope>DEAMIDATION AT GLN-593 AND GLN-594 BY CHED</scope>
    <scope>MUTAGENESIS OF GLN-593 AND GLN-594</scope>
</reference>
<reference key="5">
    <citation type="journal article" date="2013" name="Mol. Microbiol.">
        <title>Flotillins functionally organize the bacterial membrane.</title>
        <authorList>
            <person name="Bach J.N."/>
            <person name="Bramkamp M."/>
        </authorList>
    </citation>
    <scope>INTERACTION WITH FLOT</scope>
    <scope>SUBCELLULAR LOCATION</scope>
    <source>
        <strain>168</strain>
    </source>
</reference>
<accession>P39214</accession>
<protein>
    <recommendedName>
        <fullName>Methyl-accepting chemotaxis protein McpA</fullName>
    </recommendedName>
    <alternativeName>
        <fullName>H1</fullName>
    </alternativeName>
</protein>
<keyword id="KW-1003">Cell membrane</keyword>
<keyword id="KW-0145">Chemotaxis</keyword>
<keyword id="KW-0903">Direct protein sequencing</keyword>
<keyword id="KW-0472">Membrane</keyword>
<keyword id="KW-0488">Methylation</keyword>
<keyword id="KW-1185">Reference proteome</keyword>
<keyword id="KW-0807">Transducer</keyword>
<keyword id="KW-0812">Transmembrane</keyword>
<keyword id="KW-1133">Transmembrane helix</keyword>
<organism>
    <name type="scientific">Bacillus subtilis (strain 168)</name>
    <dbReference type="NCBI Taxonomy" id="224308"/>
    <lineage>
        <taxon>Bacteria</taxon>
        <taxon>Bacillati</taxon>
        <taxon>Bacillota</taxon>
        <taxon>Bacilli</taxon>
        <taxon>Bacillales</taxon>
        <taxon>Bacillaceae</taxon>
        <taxon>Bacillus</taxon>
    </lineage>
</organism>
<sequence>MKKILQLIKQRSITRKLLVSFLSILIIPVVILAIFAYQSASSSLDRQMMGSALENVQQLNEIINTSIGEKENSADYFSEWLTKEKYNAKSNASIAEKFSQYISINKDVESIYTSDTKGHFTRYPDLPMPSGYNPVERDWYKKAVANKGKVVITDPYKTASTNTMVVTIAQQTKDGSGVIAINMTIENLLKTTKKVNIGTQGYAFIMTKDKKVVAHPNEQSGTELKGDWLDKMLSADKGDFQYTMDGDKKKMAFDTNKLTGWKIGGTMYLDEIHEAAQPVLHLALIVLAAAIIIGIIVMTLIIRSITTPLKQLVGSSKRISEGDLTETIDIRSKDELGELGKSFNNMASSLRSLIHAIQDSVDNVAASSEELTASAAQTSKATEHITLAIEQFSNGNEKQNENIETAAEHIYQMNDGLTNMAQASEVITDSSVQSTEIASEGGKLVHQTVGQMNVIDKSVKEAEQVVRGLETKSKDITNILRVINGIADQTNLLALNAAIEAARAGEYGRGFSVVAEEVRKLAVQSADSAKEIEGLIIEIVKEINTSLGMFQSVNQEVQTGLDITDKTEMSFKRISEMTNQIAGELQNMSATVQQLSASSEEVSGASEHIASISKESSAHIQDIAASAEEQLASMEEISSSAETLSSMAEELRDMTKRFKIE</sequence>
<gene>
    <name type="primary">mcpA</name>
    <name type="ordered locus">BSU31240</name>
</gene>
<evidence type="ECO:0000255" key="1"/>
<evidence type="ECO:0000255" key="2">
    <source>
        <dbReference type="PROSITE-ProRule" id="PRU00102"/>
    </source>
</evidence>
<evidence type="ECO:0000255" key="3">
    <source>
        <dbReference type="PROSITE-ProRule" id="PRU00284"/>
    </source>
</evidence>
<evidence type="ECO:0000269" key="4">
    <source>
    </source>
</evidence>
<evidence type="ECO:0000269" key="5">
    <source>
    </source>
</evidence>
<evidence type="ECO:0000269" key="6">
    <source>
    </source>
</evidence>
<evidence type="ECO:0000305" key="7"/>
<evidence type="ECO:0000305" key="8">
    <source>
    </source>
</evidence>
<name>MCPA_BACSU</name>
<feature type="chain" id="PRO_0000110556" description="Methyl-accepting chemotaxis protein McpA">
    <location>
        <begin position="1"/>
        <end position="661"/>
    </location>
</feature>
<feature type="topological domain" description="Cytoplasmic" evidence="1">
    <location>
        <begin position="1"/>
        <end position="16"/>
    </location>
</feature>
<feature type="transmembrane region" description="Helical" evidence="1">
    <location>
        <begin position="17"/>
        <end position="37"/>
    </location>
</feature>
<feature type="topological domain" description="Extracellular" evidence="1">
    <location>
        <begin position="38"/>
        <end position="281"/>
    </location>
</feature>
<feature type="transmembrane region" description="Helical" evidence="1">
    <location>
        <begin position="282"/>
        <end position="302"/>
    </location>
</feature>
<feature type="topological domain" description="Cytoplasmic" evidence="1">
    <location>
        <begin position="303"/>
        <end position="661"/>
    </location>
</feature>
<feature type="domain" description="Cache">
    <location>
        <begin position="152"/>
        <end position="228"/>
    </location>
</feature>
<feature type="domain" description="HAMP" evidence="2">
    <location>
        <begin position="303"/>
        <end position="355"/>
    </location>
</feature>
<feature type="domain" description="Methyl-accepting transducer" evidence="3">
    <location>
        <begin position="374"/>
        <end position="610"/>
    </location>
</feature>
<feature type="modified residue" description="Glutamate methyl ester (Glu)" evidence="8">
    <location>
        <position position="370"/>
    </location>
</feature>
<feature type="modified residue" description="Deamidated glutamine" evidence="4">
    <location>
        <position position="593"/>
    </location>
</feature>
<feature type="modified residue" description="Deamidated glutamine" evidence="4">
    <location>
        <position position="594"/>
    </location>
</feature>
<feature type="modified residue" description="Glutamate methyl ester (Gln)" evidence="4 6">
    <location>
        <position position="594"/>
    </location>
</feature>
<feature type="modified residue" description="Glutamate methyl ester (Glu)" evidence="8">
    <location>
        <position position="629"/>
    </location>
</feature>
<feature type="modified residue" description="Glutamate methyl ester (Glu)" evidence="8">
    <location>
        <position position="636"/>
    </location>
</feature>
<feature type="mutagenesis site" description="No CheD modification at Q-593 and Q-594 but modification possible at the unidentified second site; when associated with A-594." evidence="4">
    <original>Q</original>
    <variation>A</variation>
    <location>
        <position position="593"/>
    </location>
</feature>
<feature type="mutagenesis site" description="No CheD modification at Q-593 and Q-594 but modification possible at the unidentified second site; when associated with A-593." evidence="4">
    <original>Q</original>
    <variation>A</variation>
    <location>
        <position position="594"/>
    </location>
</feature>
<feature type="sequence conflict" description="In Ref. 1; AAA20556." evidence="7" ref="1">
    <original>A</original>
    <variation>R</variation>
    <location>
        <position position="95"/>
    </location>
</feature>
<proteinExistence type="evidence at protein level"/>